<sequence length="79" mass="8476">MSQEILEKVCSIVSEQLSVEAGEVKSDSNFQNDLGADSLDTVELVMALEEAFDIEIPDEAAEGIATVGDAVKFIEEKKG</sequence>
<protein>
    <recommendedName>
        <fullName evidence="1">Acyl carrier protein</fullName>
        <shortName evidence="1">ACP</shortName>
    </recommendedName>
</protein>
<dbReference type="EMBL" id="CP000576">
    <property type="protein sequence ID" value="ABO18424.1"/>
    <property type="molecule type" value="Genomic_DNA"/>
</dbReference>
<dbReference type="RefSeq" id="WP_002808065.1">
    <property type="nucleotide sequence ID" value="NC_009091.1"/>
</dbReference>
<dbReference type="SMR" id="A3PF99"/>
<dbReference type="STRING" id="167546.P9301_18011"/>
<dbReference type="KEGG" id="pmg:P9301_18011"/>
<dbReference type="eggNOG" id="COG0236">
    <property type="taxonomic scope" value="Bacteria"/>
</dbReference>
<dbReference type="HOGENOM" id="CLU_108696_5_1_3"/>
<dbReference type="OrthoDB" id="9804551at2"/>
<dbReference type="UniPathway" id="UPA00094"/>
<dbReference type="Proteomes" id="UP000001430">
    <property type="component" value="Chromosome"/>
</dbReference>
<dbReference type="GO" id="GO:0005829">
    <property type="term" value="C:cytosol"/>
    <property type="evidence" value="ECO:0007669"/>
    <property type="project" value="TreeGrafter"/>
</dbReference>
<dbReference type="GO" id="GO:0016020">
    <property type="term" value="C:membrane"/>
    <property type="evidence" value="ECO:0007669"/>
    <property type="project" value="GOC"/>
</dbReference>
<dbReference type="GO" id="GO:0000035">
    <property type="term" value="F:acyl binding"/>
    <property type="evidence" value="ECO:0007669"/>
    <property type="project" value="TreeGrafter"/>
</dbReference>
<dbReference type="GO" id="GO:0000036">
    <property type="term" value="F:acyl carrier activity"/>
    <property type="evidence" value="ECO:0007669"/>
    <property type="project" value="UniProtKB-UniRule"/>
</dbReference>
<dbReference type="GO" id="GO:0009245">
    <property type="term" value="P:lipid A biosynthetic process"/>
    <property type="evidence" value="ECO:0007669"/>
    <property type="project" value="TreeGrafter"/>
</dbReference>
<dbReference type="FunFam" id="1.10.1200.10:FF:000003">
    <property type="entry name" value="Acyl carrier protein"/>
    <property type="match status" value="1"/>
</dbReference>
<dbReference type="Gene3D" id="1.10.1200.10">
    <property type="entry name" value="ACP-like"/>
    <property type="match status" value="1"/>
</dbReference>
<dbReference type="HAMAP" id="MF_01217">
    <property type="entry name" value="Acyl_carrier"/>
    <property type="match status" value="1"/>
</dbReference>
<dbReference type="InterPro" id="IPR003231">
    <property type="entry name" value="ACP"/>
</dbReference>
<dbReference type="InterPro" id="IPR036736">
    <property type="entry name" value="ACP-like_sf"/>
</dbReference>
<dbReference type="InterPro" id="IPR009081">
    <property type="entry name" value="PP-bd_ACP"/>
</dbReference>
<dbReference type="InterPro" id="IPR006162">
    <property type="entry name" value="Ppantetheine_attach_site"/>
</dbReference>
<dbReference type="NCBIfam" id="TIGR00517">
    <property type="entry name" value="acyl_carrier"/>
    <property type="match status" value="1"/>
</dbReference>
<dbReference type="NCBIfam" id="NF002148">
    <property type="entry name" value="PRK00982.1-2"/>
    <property type="match status" value="1"/>
</dbReference>
<dbReference type="NCBIfam" id="NF002150">
    <property type="entry name" value="PRK00982.1-4"/>
    <property type="match status" value="1"/>
</dbReference>
<dbReference type="NCBIfam" id="NF002151">
    <property type="entry name" value="PRK00982.1-5"/>
    <property type="match status" value="1"/>
</dbReference>
<dbReference type="PANTHER" id="PTHR20863">
    <property type="entry name" value="ACYL CARRIER PROTEIN"/>
    <property type="match status" value="1"/>
</dbReference>
<dbReference type="PANTHER" id="PTHR20863:SF76">
    <property type="entry name" value="CARRIER DOMAIN-CONTAINING PROTEIN"/>
    <property type="match status" value="1"/>
</dbReference>
<dbReference type="Pfam" id="PF00550">
    <property type="entry name" value="PP-binding"/>
    <property type="match status" value="1"/>
</dbReference>
<dbReference type="SUPFAM" id="SSF47336">
    <property type="entry name" value="ACP-like"/>
    <property type="match status" value="1"/>
</dbReference>
<dbReference type="PROSITE" id="PS50075">
    <property type="entry name" value="CARRIER"/>
    <property type="match status" value="1"/>
</dbReference>
<dbReference type="PROSITE" id="PS00012">
    <property type="entry name" value="PHOSPHOPANTETHEINE"/>
    <property type="match status" value="1"/>
</dbReference>
<feature type="chain" id="PRO_1000066651" description="Acyl carrier protein">
    <location>
        <begin position="1"/>
        <end position="79"/>
    </location>
</feature>
<feature type="domain" description="Carrier" evidence="2">
    <location>
        <begin position="3"/>
        <end position="78"/>
    </location>
</feature>
<feature type="modified residue" description="O-(pantetheine 4'-phosphoryl)serine" evidence="2">
    <location>
        <position position="38"/>
    </location>
</feature>
<keyword id="KW-0963">Cytoplasm</keyword>
<keyword id="KW-0275">Fatty acid biosynthesis</keyword>
<keyword id="KW-0276">Fatty acid metabolism</keyword>
<keyword id="KW-0444">Lipid biosynthesis</keyword>
<keyword id="KW-0443">Lipid metabolism</keyword>
<keyword id="KW-0596">Phosphopantetheine</keyword>
<keyword id="KW-0597">Phosphoprotein</keyword>
<keyword id="KW-1185">Reference proteome</keyword>
<reference key="1">
    <citation type="journal article" date="2007" name="PLoS Genet.">
        <title>Patterns and implications of gene gain and loss in the evolution of Prochlorococcus.</title>
        <authorList>
            <person name="Kettler G.C."/>
            <person name="Martiny A.C."/>
            <person name="Huang K."/>
            <person name="Zucker J."/>
            <person name="Coleman M.L."/>
            <person name="Rodrigue S."/>
            <person name="Chen F."/>
            <person name="Lapidus A."/>
            <person name="Ferriera S."/>
            <person name="Johnson J."/>
            <person name="Steglich C."/>
            <person name="Church G.M."/>
            <person name="Richardson P."/>
            <person name="Chisholm S.W."/>
        </authorList>
    </citation>
    <scope>NUCLEOTIDE SEQUENCE [LARGE SCALE GENOMIC DNA]</scope>
    <source>
        <strain>MIT 9301</strain>
    </source>
</reference>
<organism>
    <name type="scientific">Prochlorococcus marinus (strain MIT 9301)</name>
    <dbReference type="NCBI Taxonomy" id="167546"/>
    <lineage>
        <taxon>Bacteria</taxon>
        <taxon>Bacillati</taxon>
        <taxon>Cyanobacteriota</taxon>
        <taxon>Cyanophyceae</taxon>
        <taxon>Synechococcales</taxon>
        <taxon>Prochlorococcaceae</taxon>
        <taxon>Prochlorococcus</taxon>
    </lineage>
</organism>
<accession>A3PF99</accession>
<comment type="function">
    <text evidence="1">Carrier of the growing fatty acid chain in fatty acid biosynthesis.</text>
</comment>
<comment type="pathway">
    <text evidence="1">Lipid metabolism; fatty acid biosynthesis.</text>
</comment>
<comment type="subcellular location">
    <subcellularLocation>
        <location evidence="1">Cytoplasm</location>
    </subcellularLocation>
</comment>
<comment type="PTM">
    <text evidence="1">4'-phosphopantetheine is transferred from CoA to a specific serine of apo-ACP by AcpS. This modification is essential for activity because fatty acids are bound in thioester linkage to the sulfhydryl of the prosthetic group.</text>
</comment>
<comment type="similarity">
    <text evidence="1">Belongs to the acyl carrier protein (ACP) family.</text>
</comment>
<proteinExistence type="inferred from homology"/>
<evidence type="ECO:0000255" key="1">
    <source>
        <dbReference type="HAMAP-Rule" id="MF_01217"/>
    </source>
</evidence>
<evidence type="ECO:0000255" key="2">
    <source>
        <dbReference type="PROSITE-ProRule" id="PRU00258"/>
    </source>
</evidence>
<gene>
    <name evidence="1" type="primary">acpP</name>
    <name type="ordered locus">P9301_18011</name>
</gene>
<name>ACP_PROM0</name>